<evidence type="ECO:0000255" key="1">
    <source>
        <dbReference type="HAMAP-Rule" id="MF_00281"/>
    </source>
</evidence>
<name>SYFA_CHLT3</name>
<protein>
    <recommendedName>
        <fullName evidence="1">Phenylalanine--tRNA ligase alpha subunit</fullName>
        <ecNumber evidence="1">6.1.1.20</ecNumber>
    </recommendedName>
    <alternativeName>
        <fullName evidence="1">Phenylalanyl-tRNA synthetase alpha subunit</fullName>
        <shortName evidence="1">PheRS</shortName>
    </alternativeName>
</protein>
<feature type="chain" id="PRO_1000114857" description="Phenylalanine--tRNA ligase alpha subunit">
    <location>
        <begin position="1"/>
        <end position="340"/>
    </location>
</feature>
<feature type="binding site" evidence="1">
    <location>
        <position position="254"/>
    </location>
    <ligand>
        <name>Mg(2+)</name>
        <dbReference type="ChEBI" id="CHEBI:18420"/>
        <note>shared with beta subunit</note>
    </ligand>
</feature>
<reference key="1">
    <citation type="submission" date="2008-06" db="EMBL/GenBank/DDBJ databases">
        <title>Complete sequence of Chloroherpeton thalassium ATCC 35110.</title>
        <authorList>
            <consortium name="US DOE Joint Genome Institute"/>
            <person name="Lucas S."/>
            <person name="Copeland A."/>
            <person name="Lapidus A."/>
            <person name="Glavina del Rio T."/>
            <person name="Dalin E."/>
            <person name="Tice H."/>
            <person name="Bruce D."/>
            <person name="Goodwin L."/>
            <person name="Pitluck S."/>
            <person name="Schmutz J."/>
            <person name="Larimer F."/>
            <person name="Land M."/>
            <person name="Hauser L."/>
            <person name="Kyrpides N."/>
            <person name="Mikhailova N."/>
            <person name="Liu Z."/>
            <person name="Li T."/>
            <person name="Zhao F."/>
            <person name="Overmann J."/>
            <person name="Bryant D.A."/>
            <person name="Richardson P."/>
        </authorList>
    </citation>
    <scope>NUCLEOTIDE SEQUENCE [LARGE SCALE GENOMIC DNA]</scope>
    <source>
        <strain>ATCC 35110 / GB-78</strain>
    </source>
</reference>
<keyword id="KW-0030">Aminoacyl-tRNA synthetase</keyword>
<keyword id="KW-0067">ATP-binding</keyword>
<keyword id="KW-0963">Cytoplasm</keyword>
<keyword id="KW-0436">Ligase</keyword>
<keyword id="KW-0460">Magnesium</keyword>
<keyword id="KW-0479">Metal-binding</keyword>
<keyword id="KW-0547">Nucleotide-binding</keyword>
<keyword id="KW-0648">Protein biosynthesis</keyword>
<keyword id="KW-1185">Reference proteome</keyword>
<organism>
    <name type="scientific">Chloroherpeton thalassium (strain ATCC 35110 / GB-78)</name>
    <dbReference type="NCBI Taxonomy" id="517418"/>
    <lineage>
        <taxon>Bacteria</taxon>
        <taxon>Pseudomonadati</taxon>
        <taxon>Chlorobiota</taxon>
        <taxon>Chlorobiia</taxon>
        <taxon>Chlorobiales</taxon>
        <taxon>Chloroherpetonaceae</taxon>
        <taxon>Chloroherpeton</taxon>
    </lineage>
</organism>
<gene>
    <name evidence="1" type="primary">pheS</name>
    <name type="ordered locus">Ctha_1998</name>
</gene>
<sequence length="340" mass="38610">MQELIEKIRQETANFEITDKDSAEAFRLKFLVRKGSIPQLFEQMKTVSKEDKPAVGKLLNELKLFADGKFKEAMEHIAANELAADDLADLTLPGRTHFLGAEHPVQKVLGDMKRIFQKMGFSTATGPEIERDAYNFTLLNFAPDHPARDMQDTFFIKKEADAEDVVLRTHTSPVQIRVMLEQAPPIRVICPGKVFRNEAVSARSYCVFHQLEGLYVDKGVTFADLKSTIYSFARQMFGSDVKMKFRPSYFPFTEPSAEVDITCYLCGGKGCRVCKHTGWLEILGCGMVHPNVLRNCGIDPEIYSGYAFGMGIERTALLRYNIDDIRLFFENDLRMLSQFE</sequence>
<comment type="catalytic activity">
    <reaction evidence="1">
        <text>tRNA(Phe) + L-phenylalanine + ATP = L-phenylalanyl-tRNA(Phe) + AMP + diphosphate + H(+)</text>
        <dbReference type="Rhea" id="RHEA:19413"/>
        <dbReference type="Rhea" id="RHEA-COMP:9668"/>
        <dbReference type="Rhea" id="RHEA-COMP:9699"/>
        <dbReference type="ChEBI" id="CHEBI:15378"/>
        <dbReference type="ChEBI" id="CHEBI:30616"/>
        <dbReference type="ChEBI" id="CHEBI:33019"/>
        <dbReference type="ChEBI" id="CHEBI:58095"/>
        <dbReference type="ChEBI" id="CHEBI:78442"/>
        <dbReference type="ChEBI" id="CHEBI:78531"/>
        <dbReference type="ChEBI" id="CHEBI:456215"/>
        <dbReference type="EC" id="6.1.1.20"/>
    </reaction>
</comment>
<comment type="cofactor">
    <cofactor evidence="1">
        <name>Mg(2+)</name>
        <dbReference type="ChEBI" id="CHEBI:18420"/>
    </cofactor>
    <text evidence="1">Binds 2 magnesium ions per tetramer.</text>
</comment>
<comment type="subunit">
    <text evidence="1">Tetramer of two alpha and two beta subunits.</text>
</comment>
<comment type="subcellular location">
    <subcellularLocation>
        <location evidence="1">Cytoplasm</location>
    </subcellularLocation>
</comment>
<comment type="similarity">
    <text evidence="1">Belongs to the class-II aminoacyl-tRNA synthetase family. Phe-tRNA synthetase alpha subunit type 1 subfamily.</text>
</comment>
<dbReference type="EC" id="6.1.1.20" evidence="1"/>
<dbReference type="EMBL" id="CP001100">
    <property type="protein sequence ID" value="ACF14452.1"/>
    <property type="molecule type" value="Genomic_DNA"/>
</dbReference>
<dbReference type="RefSeq" id="WP_012500535.1">
    <property type="nucleotide sequence ID" value="NC_011026.1"/>
</dbReference>
<dbReference type="SMR" id="B3QUV1"/>
<dbReference type="STRING" id="517418.Ctha_1998"/>
<dbReference type="KEGG" id="cts:Ctha_1998"/>
<dbReference type="eggNOG" id="COG0016">
    <property type="taxonomic scope" value="Bacteria"/>
</dbReference>
<dbReference type="HOGENOM" id="CLU_025086_0_1_10"/>
<dbReference type="OrthoDB" id="9800719at2"/>
<dbReference type="Proteomes" id="UP000001208">
    <property type="component" value="Chromosome"/>
</dbReference>
<dbReference type="GO" id="GO:0005737">
    <property type="term" value="C:cytoplasm"/>
    <property type="evidence" value="ECO:0007669"/>
    <property type="project" value="UniProtKB-SubCell"/>
</dbReference>
<dbReference type="GO" id="GO:0005524">
    <property type="term" value="F:ATP binding"/>
    <property type="evidence" value="ECO:0007669"/>
    <property type="project" value="UniProtKB-UniRule"/>
</dbReference>
<dbReference type="GO" id="GO:0000287">
    <property type="term" value="F:magnesium ion binding"/>
    <property type="evidence" value="ECO:0007669"/>
    <property type="project" value="UniProtKB-UniRule"/>
</dbReference>
<dbReference type="GO" id="GO:0004826">
    <property type="term" value="F:phenylalanine-tRNA ligase activity"/>
    <property type="evidence" value="ECO:0007669"/>
    <property type="project" value="UniProtKB-UniRule"/>
</dbReference>
<dbReference type="GO" id="GO:0000049">
    <property type="term" value="F:tRNA binding"/>
    <property type="evidence" value="ECO:0007669"/>
    <property type="project" value="InterPro"/>
</dbReference>
<dbReference type="GO" id="GO:0006432">
    <property type="term" value="P:phenylalanyl-tRNA aminoacylation"/>
    <property type="evidence" value="ECO:0007669"/>
    <property type="project" value="UniProtKB-UniRule"/>
</dbReference>
<dbReference type="CDD" id="cd00496">
    <property type="entry name" value="PheRS_alpha_core"/>
    <property type="match status" value="1"/>
</dbReference>
<dbReference type="Gene3D" id="3.30.930.10">
    <property type="entry name" value="Bira Bifunctional Protein, Domain 2"/>
    <property type="match status" value="1"/>
</dbReference>
<dbReference type="HAMAP" id="MF_00281">
    <property type="entry name" value="Phe_tRNA_synth_alpha1"/>
    <property type="match status" value="1"/>
</dbReference>
<dbReference type="InterPro" id="IPR006195">
    <property type="entry name" value="aa-tRNA-synth_II"/>
</dbReference>
<dbReference type="InterPro" id="IPR045864">
    <property type="entry name" value="aa-tRNA-synth_II/BPL/LPL"/>
</dbReference>
<dbReference type="InterPro" id="IPR004529">
    <property type="entry name" value="Phe-tRNA-synth_IIc_asu"/>
</dbReference>
<dbReference type="InterPro" id="IPR004188">
    <property type="entry name" value="Phe-tRNA_ligase_II_N"/>
</dbReference>
<dbReference type="InterPro" id="IPR022911">
    <property type="entry name" value="Phe_tRNA_ligase_alpha1_bac"/>
</dbReference>
<dbReference type="InterPro" id="IPR002319">
    <property type="entry name" value="Phenylalanyl-tRNA_Synthase"/>
</dbReference>
<dbReference type="InterPro" id="IPR010978">
    <property type="entry name" value="tRNA-bd_arm"/>
</dbReference>
<dbReference type="NCBIfam" id="TIGR00468">
    <property type="entry name" value="pheS"/>
    <property type="match status" value="1"/>
</dbReference>
<dbReference type="PANTHER" id="PTHR11538:SF41">
    <property type="entry name" value="PHENYLALANINE--TRNA LIGASE, MITOCHONDRIAL"/>
    <property type="match status" value="1"/>
</dbReference>
<dbReference type="PANTHER" id="PTHR11538">
    <property type="entry name" value="PHENYLALANYL-TRNA SYNTHETASE"/>
    <property type="match status" value="1"/>
</dbReference>
<dbReference type="Pfam" id="PF02912">
    <property type="entry name" value="Phe_tRNA-synt_N"/>
    <property type="match status" value="1"/>
</dbReference>
<dbReference type="Pfam" id="PF01409">
    <property type="entry name" value="tRNA-synt_2d"/>
    <property type="match status" value="1"/>
</dbReference>
<dbReference type="SUPFAM" id="SSF55681">
    <property type="entry name" value="Class II aaRS and biotin synthetases"/>
    <property type="match status" value="1"/>
</dbReference>
<dbReference type="SUPFAM" id="SSF46589">
    <property type="entry name" value="tRNA-binding arm"/>
    <property type="match status" value="1"/>
</dbReference>
<dbReference type="PROSITE" id="PS50862">
    <property type="entry name" value="AA_TRNA_LIGASE_II"/>
    <property type="match status" value="1"/>
</dbReference>
<proteinExistence type="inferred from homology"/>
<accession>B3QUV1</accession>